<feature type="signal peptide" evidence="2">
    <location>
        <begin position="1"/>
        <end position="21"/>
    </location>
</feature>
<feature type="chain" id="PRO_0000261312" description="L-lysine N6-monooxygenase MbtG">
    <location>
        <begin position="22"/>
        <end position="431"/>
    </location>
</feature>
<accession>P9WKF7</accession>
<accession>L0TCC4</accession>
<accession>O05820</accession>
<accession>Q7D793</accession>
<protein>
    <recommendedName>
        <fullName>L-lysine N6-monooxygenase MbtG</fullName>
        <ecNumber evidence="3">1.14.13.59</ecNumber>
    </recommendedName>
    <alternativeName>
        <fullName>Lysine 6-N-hydroxylase</fullName>
    </alternativeName>
    <alternativeName>
        <fullName>Lysine N6-hydroxylase</fullName>
    </alternativeName>
    <alternativeName>
        <fullName>Lysine-N-oxygenase</fullName>
    </alternativeName>
    <alternativeName>
        <fullName>Mycobactin synthase protein G</fullName>
    </alternativeName>
</protein>
<keyword id="KW-0274">FAD</keyword>
<keyword id="KW-0285">Flavoprotein</keyword>
<keyword id="KW-0503">Monooxygenase</keyword>
<keyword id="KW-0521">NADP</keyword>
<keyword id="KW-0560">Oxidoreductase</keyword>
<keyword id="KW-1185">Reference proteome</keyword>
<keyword id="KW-0732">Signal</keyword>
<dbReference type="EC" id="1.14.13.59" evidence="3"/>
<dbReference type="EMBL" id="AL123456">
    <property type="protein sequence ID" value="CCP45166.1"/>
    <property type="molecule type" value="Genomic_DNA"/>
</dbReference>
<dbReference type="PIR" id="A70588">
    <property type="entry name" value="A70588"/>
</dbReference>
<dbReference type="RefSeq" id="NP_216894.1">
    <property type="nucleotide sequence ID" value="NC_000962.3"/>
</dbReference>
<dbReference type="RefSeq" id="WP_003899296.1">
    <property type="nucleotide sequence ID" value="NZ_NVQJ01000029.1"/>
</dbReference>
<dbReference type="SMR" id="P9WKF7"/>
<dbReference type="FunCoup" id="P9WKF7">
    <property type="interactions" value="8"/>
</dbReference>
<dbReference type="STRING" id="83332.Rv2378c"/>
<dbReference type="PaxDb" id="83332-Rv2378c"/>
<dbReference type="DNASU" id="885648"/>
<dbReference type="GeneID" id="885648"/>
<dbReference type="KEGG" id="mtu:Rv2378c"/>
<dbReference type="KEGG" id="mtv:RVBD_2378c"/>
<dbReference type="TubercuList" id="Rv2378c"/>
<dbReference type="eggNOG" id="COG3486">
    <property type="taxonomic scope" value="Bacteria"/>
</dbReference>
<dbReference type="InParanoid" id="P9WKF7"/>
<dbReference type="OrthoDB" id="9149460at2"/>
<dbReference type="BioCyc" id="MetaCyc:G185E-6604-MONOMER"/>
<dbReference type="UniPathway" id="UPA00011"/>
<dbReference type="Proteomes" id="UP000001584">
    <property type="component" value="Chromosome"/>
</dbReference>
<dbReference type="GO" id="GO:0050660">
    <property type="term" value="F:flavin adenine dinucleotide binding"/>
    <property type="evidence" value="ECO:0000318"/>
    <property type="project" value="GO_Central"/>
</dbReference>
<dbReference type="GO" id="GO:0047091">
    <property type="term" value="F:L-lysine 6-monooxygenase (NADPH) activity"/>
    <property type="evidence" value="ECO:0000314"/>
    <property type="project" value="MTBBASE"/>
</dbReference>
<dbReference type="GO" id="GO:0004497">
    <property type="term" value="F:monooxygenase activity"/>
    <property type="evidence" value="ECO:0000318"/>
    <property type="project" value="GO_Central"/>
</dbReference>
<dbReference type="GO" id="GO:0019540">
    <property type="term" value="P:catechol-containing siderophore biosynthetic process"/>
    <property type="evidence" value="ECO:0000314"/>
    <property type="project" value="MTBBASE"/>
</dbReference>
<dbReference type="Gene3D" id="3.50.50.60">
    <property type="entry name" value="FAD/NAD(P)-binding domain"/>
    <property type="match status" value="1"/>
</dbReference>
<dbReference type="InterPro" id="IPR036188">
    <property type="entry name" value="FAD/NAD-bd_sf"/>
</dbReference>
<dbReference type="InterPro" id="IPR025700">
    <property type="entry name" value="Lys/Orn_oxygenase"/>
</dbReference>
<dbReference type="Pfam" id="PF13434">
    <property type="entry name" value="Lys_Orn_oxgnase"/>
    <property type="match status" value="1"/>
</dbReference>
<dbReference type="SUPFAM" id="SSF51905">
    <property type="entry name" value="FAD/NAD(P)-binding domain"/>
    <property type="match status" value="1"/>
</dbReference>
<name>MBTG_MYCTU</name>
<sequence length="431" mass="46944">MNPTLAVLGAGAKAVAVAAKASVLRDMGVDVPDVIAVERIGVGANWQASGGWTDGAHRLGTSPEKDVGFPYRSALVPRRNAELDERMTRYSWQSYLIATASFAEWIDRGRPAPTHRRWSQYLAWVADHIGLKVIHGEVERLAVTGDRWALCTHETTVQADALMITGPGQAEKSLLPGNPRVLSIAQFWDRAAGHDRINAERVAVIGGGETAASMLNELFRHRVSTITVISPQVTLFTRGEGFFENSLFSDPTDWAALTFDERRDALARTDRGVFSATVQEALLADDRIHHLRGRVAHAVGRQGQIRLTLSTNRGSENFETVHGFDLVIDGSGADPLWFTSLFSQHTLDLLELGLGGPLTADRLQEAIGYDLAVTDVTPKLFLPTLSGLTQGPGFPNLSCLGLLSDRVLGAGIFTPTKHNDTRRSGEHQSFR</sequence>
<comment type="function">
    <text evidence="3">Flavoprotein monooxygenase required for N-hydroxylation of the two acylated lysine residues during mycobactin assembly, thus producing the hydroxamate groups necessary for iron sequestration. Is also able, but less efficiently, to hydroxylate L-lysine (non acylated) in vitro. Shows 5-fold preference for using acetylated lysine over lysine.</text>
</comment>
<comment type="catalytic activity">
    <reaction evidence="3">
        <text>L-lysine + NADPH + O2 = N(6)-hydroxy-L-lysine + NADP(+) + H2O</text>
        <dbReference type="Rhea" id="RHEA:23228"/>
        <dbReference type="ChEBI" id="CHEBI:15377"/>
        <dbReference type="ChEBI" id="CHEBI:15379"/>
        <dbReference type="ChEBI" id="CHEBI:32551"/>
        <dbReference type="ChEBI" id="CHEBI:57783"/>
        <dbReference type="ChEBI" id="CHEBI:57820"/>
        <dbReference type="ChEBI" id="CHEBI:58349"/>
        <dbReference type="EC" id="1.14.13.59"/>
    </reaction>
</comment>
<comment type="cofactor">
    <cofactor evidence="3">
        <name>FAD</name>
        <dbReference type="ChEBI" id="CHEBI:57692"/>
    </cofactor>
</comment>
<comment type="pathway">
    <text evidence="5">Siderophore biosynthesis; mycobactin biosynthesis.</text>
</comment>
<comment type="induction">
    <text evidence="1">Induced by iron starvation conditions and during infection of human THP-1 macrophages. Transcriptionally repressed by ideR and iron (By similarity).</text>
</comment>
<comment type="similarity">
    <text evidence="4">Belongs to the lysine N(6)-hydroxylase/L-ornithine N(5)-oxygenase family.</text>
</comment>
<reference key="1">
    <citation type="journal article" date="1998" name="Nature">
        <title>Deciphering the biology of Mycobacterium tuberculosis from the complete genome sequence.</title>
        <authorList>
            <person name="Cole S.T."/>
            <person name="Brosch R."/>
            <person name="Parkhill J."/>
            <person name="Garnier T."/>
            <person name="Churcher C.M."/>
            <person name="Harris D.E."/>
            <person name="Gordon S.V."/>
            <person name="Eiglmeier K."/>
            <person name="Gas S."/>
            <person name="Barry C.E. III"/>
            <person name="Tekaia F."/>
            <person name="Badcock K."/>
            <person name="Basham D."/>
            <person name="Brown D."/>
            <person name="Chillingworth T."/>
            <person name="Connor R."/>
            <person name="Davies R.M."/>
            <person name="Devlin K."/>
            <person name="Feltwell T."/>
            <person name="Gentles S."/>
            <person name="Hamlin N."/>
            <person name="Holroyd S."/>
            <person name="Hornsby T."/>
            <person name="Jagels K."/>
            <person name="Krogh A."/>
            <person name="McLean J."/>
            <person name="Moule S."/>
            <person name="Murphy L.D."/>
            <person name="Oliver S."/>
            <person name="Osborne J."/>
            <person name="Quail M.A."/>
            <person name="Rajandream M.A."/>
            <person name="Rogers J."/>
            <person name="Rutter S."/>
            <person name="Seeger K."/>
            <person name="Skelton S."/>
            <person name="Squares S."/>
            <person name="Squares R."/>
            <person name="Sulston J.E."/>
            <person name="Taylor K."/>
            <person name="Whitehead S."/>
            <person name="Barrell B.G."/>
        </authorList>
    </citation>
    <scope>NUCLEOTIDE SEQUENCE [LARGE SCALE GENOMIC DNA]</scope>
    <source>
        <strain>ATCC 25618 / H37Rv</strain>
    </source>
</reference>
<reference key="2">
    <citation type="journal article" date="2006" name="Proc. Natl. Acad. Sci. U.S.A.">
        <title>A genetic locus required for iron acquisition in Mycobacterium tuberculosis.</title>
        <authorList>
            <person name="Krithika R."/>
            <person name="Marathe U."/>
            <person name="Saxena P."/>
            <person name="Ansari M.Z."/>
            <person name="Mohanty D."/>
            <person name="Gokhale R.S."/>
        </authorList>
    </citation>
    <scope>FUNCTION</scope>
    <scope>CATALYTIC ACTIVITY</scope>
    <scope>COFACTOR</scope>
    <scope>PATHWAY</scope>
    <source>
        <strain>ATCC 25618 / H37Rv</strain>
    </source>
</reference>
<reference key="3">
    <citation type="journal article" date="2011" name="Mol. Cell. Proteomics">
        <title>Proteogenomic analysis of Mycobacterium tuberculosis by high resolution mass spectrometry.</title>
        <authorList>
            <person name="Kelkar D.S."/>
            <person name="Kumar D."/>
            <person name="Kumar P."/>
            <person name="Balakrishnan L."/>
            <person name="Muthusamy B."/>
            <person name="Yadav A.K."/>
            <person name="Shrivastava P."/>
            <person name="Marimuthu A."/>
            <person name="Anand S."/>
            <person name="Sundaram H."/>
            <person name="Kingsbury R."/>
            <person name="Harsha H.C."/>
            <person name="Nair B."/>
            <person name="Prasad T.S."/>
            <person name="Chauhan D.S."/>
            <person name="Katoch K."/>
            <person name="Katoch V.M."/>
            <person name="Kumar P."/>
            <person name="Chaerkady R."/>
            <person name="Ramachandran S."/>
            <person name="Dash D."/>
            <person name="Pandey A."/>
        </authorList>
    </citation>
    <scope>IDENTIFICATION BY MASS SPECTROMETRY [LARGE SCALE ANALYSIS]</scope>
    <source>
        <strain>ATCC 25618 / H37Rv</strain>
    </source>
</reference>
<gene>
    <name type="primary">mbtG</name>
    <name type="ordered locus">Rv2378c</name>
</gene>
<evidence type="ECO:0000250" key="1"/>
<evidence type="ECO:0000255" key="2"/>
<evidence type="ECO:0000269" key="3">
    <source>
    </source>
</evidence>
<evidence type="ECO:0000305" key="4"/>
<evidence type="ECO:0000305" key="5">
    <source>
    </source>
</evidence>
<proteinExistence type="evidence at protein level"/>
<organism>
    <name type="scientific">Mycobacterium tuberculosis (strain ATCC 25618 / H37Rv)</name>
    <dbReference type="NCBI Taxonomy" id="83332"/>
    <lineage>
        <taxon>Bacteria</taxon>
        <taxon>Bacillati</taxon>
        <taxon>Actinomycetota</taxon>
        <taxon>Actinomycetes</taxon>
        <taxon>Mycobacteriales</taxon>
        <taxon>Mycobacteriaceae</taxon>
        <taxon>Mycobacterium</taxon>
        <taxon>Mycobacterium tuberculosis complex</taxon>
    </lineage>
</organism>